<organism>
    <name type="scientific">Haemophilus influenzae (strain PittGG)</name>
    <dbReference type="NCBI Taxonomy" id="374931"/>
    <lineage>
        <taxon>Bacteria</taxon>
        <taxon>Pseudomonadati</taxon>
        <taxon>Pseudomonadota</taxon>
        <taxon>Gammaproteobacteria</taxon>
        <taxon>Pasteurellales</taxon>
        <taxon>Pasteurellaceae</taxon>
        <taxon>Haemophilus</taxon>
    </lineage>
</organism>
<comment type="function">
    <text evidence="1">Chaperone involved in the maturation of iron-sulfur cluster-containing proteins. Has a low intrinsic ATPase activity which is markedly stimulated by HscB.</text>
</comment>
<comment type="similarity">
    <text evidence="1">Belongs to the heat shock protein 70 family.</text>
</comment>
<accession>A5UGH6</accession>
<keyword id="KW-0067">ATP-binding</keyword>
<keyword id="KW-0143">Chaperone</keyword>
<keyword id="KW-0547">Nucleotide-binding</keyword>
<reference key="1">
    <citation type="journal article" date="2007" name="Genome Biol.">
        <title>Characterization and modeling of the Haemophilus influenzae core and supragenomes based on the complete genomic sequences of Rd and 12 clinical nontypeable strains.</title>
        <authorList>
            <person name="Hogg J.S."/>
            <person name="Hu F.Z."/>
            <person name="Janto B."/>
            <person name="Boissy R."/>
            <person name="Hayes J."/>
            <person name="Keefe R."/>
            <person name="Post J.C."/>
            <person name="Ehrlich G.D."/>
        </authorList>
    </citation>
    <scope>NUCLEOTIDE SEQUENCE [LARGE SCALE GENOMIC DNA]</scope>
    <source>
        <strain>PittGG</strain>
    </source>
</reference>
<sequence length="619" mass="66948">MALLQIAEPGQAAAPHQHRLAVGIDLGTTNSLVASVRSGQSVILNDEQERSLVPSVVHYGVEEKKVGLEAFEQASLDPKNTVISVKRLIGRSLSDVQSRYSSLPYEFVASENGLPLIITAQGSKSPIEVSSDILSRLNHIAEQRLGGELSGVVITVPAYFDDAQRQSTKDAARLAGLNVLRLLNEPTAAALAYGLDSGQEGIIAVYDLGGGTFDISILRLSKGIFEVLATGGDTALGGDDFDHLIADWIIEQTKLKPQTANQQRELITLANQAKITLTNEKSAVISWQDFSVEISREQFNELIYPLVKRSLLTCRRALKDANVESEEVQAVVMVGGSTRVPYVREQVGEFFGKTPLTSIDPDKVVALGAAIQADILVGNKTDSDMLLLDVVPLSLGIETMGGLVEKIIPRNTTIPVARAQEFTTFKDGQTAMTVHVLQGERELVDDCRSLGRFTLRGIPPMAAGAAHIRVTYQVDADGLLSVTAMEKSTKVQSSIQIKPSYGLTDEEVTAMIKSSFDNAQEDLQARELAEQRVEADRVIESVIVALQADGAELLSTDEFHHIETVLKQLMDVKLGSDRDAIAQGIKALDTATQEFAARRMNASINKALTGKNLSDIENP</sequence>
<name>HSCA_HAEIG</name>
<protein>
    <recommendedName>
        <fullName evidence="1">Chaperone protein HscA homolog</fullName>
    </recommendedName>
</protein>
<dbReference type="EMBL" id="CP000672">
    <property type="protein sequence ID" value="ABQ99881.1"/>
    <property type="molecule type" value="Genomic_DNA"/>
</dbReference>
<dbReference type="SMR" id="A5UGH6"/>
<dbReference type="KEGG" id="hiq:CGSHiGG_04675"/>
<dbReference type="HOGENOM" id="CLU_005965_2_1_6"/>
<dbReference type="Proteomes" id="UP000001990">
    <property type="component" value="Chromosome"/>
</dbReference>
<dbReference type="GO" id="GO:0005524">
    <property type="term" value="F:ATP binding"/>
    <property type="evidence" value="ECO:0007669"/>
    <property type="project" value="UniProtKB-KW"/>
</dbReference>
<dbReference type="GO" id="GO:0016887">
    <property type="term" value="F:ATP hydrolysis activity"/>
    <property type="evidence" value="ECO:0007669"/>
    <property type="project" value="UniProtKB-UniRule"/>
</dbReference>
<dbReference type="GO" id="GO:0140662">
    <property type="term" value="F:ATP-dependent protein folding chaperone"/>
    <property type="evidence" value="ECO:0007669"/>
    <property type="project" value="InterPro"/>
</dbReference>
<dbReference type="GO" id="GO:0051082">
    <property type="term" value="F:unfolded protein binding"/>
    <property type="evidence" value="ECO:0007669"/>
    <property type="project" value="InterPro"/>
</dbReference>
<dbReference type="GO" id="GO:0016226">
    <property type="term" value="P:iron-sulfur cluster assembly"/>
    <property type="evidence" value="ECO:0007669"/>
    <property type="project" value="InterPro"/>
</dbReference>
<dbReference type="CDD" id="cd10236">
    <property type="entry name" value="ASKHA_NBD_HSP70_HscA"/>
    <property type="match status" value="1"/>
</dbReference>
<dbReference type="FunFam" id="3.30.420.40:FF:000046">
    <property type="entry name" value="Chaperone protein HscA"/>
    <property type="match status" value="1"/>
</dbReference>
<dbReference type="FunFam" id="2.60.34.10:FF:000005">
    <property type="entry name" value="Chaperone protein HscA homolog"/>
    <property type="match status" value="1"/>
</dbReference>
<dbReference type="FunFam" id="3.30.420.40:FF:000020">
    <property type="entry name" value="Chaperone protein HscA homolog"/>
    <property type="match status" value="1"/>
</dbReference>
<dbReference type="Gene3D" id="1.20.1270.10">
    <property type="match status" value="1"/>
</dbReference>
<dbReference type="Gene3D" id="3.30.420.40">
    <property type="match status" value="2"/>
</dbReference>
<dbReference type="Gene3D" id="3.90.640.10">
    <property type="entry name" value="Actin, Chain A, domain 4"/>
    <property type="match status" value="1"/>
</dbReference>
<dbReference type="Gene3D" id="2.60.34.10">
    <property type="entry name" value="Substrate Binding Domain Of DNAk, Chain A, domain 1"/>
    <property type="match status" value="1"/>
</dbReference>
<dbReference type="HAMAP" id="MF_00679">
    <property type="entry name" value="HscA"/>
    <property type="match status" value="1"/>
</dbReference>
<dbReference type="InterPro" id="IPR043129">
    <property type="entry name" value="ATPase_NBD"/>
</dbReference>
<dbReference type="InterPro" id="IPR018181">
    <property type="entry name" value="Heat_shock_70_CS"/>
</dbReference>
<dbReference type="InterPro" id="IPR042039">
    <property type="entry name" value="HscA_NBD"/>
</dbReference>
<dbReference type="InterPro" id="IPR029048">
    <property type="entry name" value="HSP70_C_sf"/>
</dbReference>
<dbReference type="InterPro" id="IPR029047">
    <property type="entry name" value="HSP70_peptide-bd_sf"/>
</dbReference>
<dbReference type="InterPro" id="IPR013126">
    <property type="entry name" value="Hsp_70_fam"/>
</dbReference>
<dbReference type="InterPro" id="IPR010236">
    <property type="entry name" value="ISC_FeS_clus_asmbl_HscA"/>
</dbReference>
<dbReference type="NCBIfam" id="TIGR01991">
    <property type="entry name" value="HscA"/>
    <property type="match status" value="1"/>
</dbReference>
<dbReference type="NCBIfam" id="NF003520">
    <property type="entry name" value="PRK05183.1"/>
    <property type="match status" value="1"/>
</dbReference>
<dbReference type="PANTHER" id="PTHR19375">
    <property type="entry name" value="HEAT SHOCK PROTEIN 70KDA"/>
    <property type="match status" value="1"/>
</dbReference>
<dbReference type="Pfam" id="PF00012">
    <property type="entry name" value="HSP70"/>
    <property type="match status" value="1"/>
</dbReference>
<dbReference type="PRINTS" id="PR00301">
    <property type="entry name" value="HEATSHOCK70"/>
</dbReference>
<dbReference type="SUPFAM" id="SSF53067">
    <property type="entry name" value="Actin-like ATPase domain"/>
    <property type="match status" value="2"/>
</dbReference>
<dbReference type="SUPFAM" id="SSF100934">
    <property type="entry name" value="Heat shock protein 70kD (HSP70), C-terminal subdomain"/>
    <property type="match status" value="1"/>
</dbReference>
<dbReference type="SUPFAM" id="SSF100920">
    <property type="entry name" value="Heat shock protein 70kD (HSP70), peptide-binding domain"/>
    <property type="match status" value="1"/>
</dbReference>
<dbReference type="PROSITE" id="PS00297">
    <property type="entry name" value="HSP70_1"/>
    <property type="match status" value="1"/>
</dbReference>
<dbReference type="PROSITE" id="PS00329">
    <property type="entry name" value="HSP70_2"/>
    <property type="match status" value="1"/>
</dbReference>
<dbReference type="PROSITE" id="PS01036">
    <property type="entry name" value="HSP70_3"/>
    <property type="match status" value="1"/>
</dbReference>
<evidence type="ECO:0000255" key="1">
    <source>
        <dbReference type="HAMAP-Rule" id="MF_00679"/>
    </source>
</evidence>
<feature type="chain" id="PRO_1000044860" description="Chaperone protein HscA homolog">
    <location>
        <begin position="1"/>
        <end position="619"/>
    </location>
</feature>
<gene>
    <name evidence="1" type="primary">hscA</name>
    <name type="ordered locus">CGSHiGG_04675</name>
</gene>
<proteinExistence type="inferred from homology"/>